<comment type="function">
    <text evidence="1">Component of the COP9 signalosome complex (CSN), a complex involved in various cellular and developmental processes (By similarity). The CSN complex is an essential regulator of the ubiquitin (Ubl) conjugation pathway by mediating the deneddylation of the cullin subunits of E3 ligase complexes, leading to modify the Ubl ligase activity (By similarity).</text>
</comment>
<comment type="subunit">
    <text evidence="1">Component of the CSN complex, probably composed of cops1, cops2, cops3, cops4, cops5, cops6, cops7, cops8 and cops9.</text>
</comment>
<comment type="subcellular location">
    <subcellularLocation>
        <location evidence="1">Cytoplasm</location>
    </subcellularLocation>
    <subcellularLocation>
        <location evidence="1">Nucleus</location>
    </subcellularLocation>
</comment>
<comment type="similarity">
    <text evidence="4">Belongs to the CSN3 family.</text>
</comment>
<organism>
    <name type="scientific">Xenopus laevis</name>
    <name type="common">African clawed frog</name>
    <dbReference type="NCBI Taxonomy" id="8355"/>
    <lineage>
        <taxon>Eukaryota</taxon>
        <taxon>Metazoa</taxon>
        <taxon>Chordata</taxon>
        <taxon>Craniata</taxon>
        <taxon>Vertebrata</taxon>
        <taxon>Euteleostomi</taxon>
        <taxon>Amphibia</taxon>
        <taxon>Batrachia</taxon>
        <taxon>Anura</taxon>
        <taxon>Pipoidea</taxon>
        <taxon>Pipidae</taxon>
        <taxon>Xenopodinae</taxon>
        <taxon>Xenopus</taxon>
        <taxon>Xenopus</taxon>
    </lineage>
</organism>
<gene>
    <name type="primary">cops3</name>
    <name type="synonym">csn3</name>
</gene>
<feature type="chain" id="PRO_0000120981" description="COP9 signalosome complex subunit 3">
    <location>
        <begin position="1"/>
        <end position="423"/>
    </location>
</feature>
<feature type="domain" description="PCI" evidence="2">
    <location>
        <begin position="197"/>
        <end position="365"/>
    </location>
</feature>
<feature type="region of interest" description="Disordered" evidence="3">
    <location>
        <begin position="401"/>
        <end position="423"/>
    </location>
</feature>
<feature type="compositionally biased region" description="Polar residues" evidence="3">
    <location>
        <begin position="401"/>
        <end position="410"/>
    </location>
</feature>
<sequence length="423" mass="47795">MASALEQFVNSVRQLSSQGQMTQLCELINKSGELLAKNLSHLDTVLGALDVQEHSLGVLAVLFVKFSMPSIPDFETLFSQVQLFISTCNGEHIRYATDTFAGLCHQLTNALVERKQPLRGICVIRQAIDKMQMNANQLTSIHGDLCQLSLLAKCFKPALAYLDVDMMDICKENGAYDAKPFLCYYYYGGMIYTGLKNFERAMYFYEQAITTPAMAVSHIMLEAYKKYILVSLILHGKVQQLPKYTSQVVGRFIKPLSNAYHELAQVYSTNNPAELRNLVSKHNETFTRDNNMGLVKQCLSSLYKKNIQRLTKTFLTLSLQDMASRVQLSGAQEAEKYVLYMIEDGEIFASINQKDGMVCFHDSPEKYNNPAMLHNIDQEMLRCIDLDDRLKAMDQEITVNPQFVQKSMGSQEDDSGSKPSSYS</sequence>
<accession>Q7ZTN8</accession>
<evidence type="ECO:0000250" key="1">
    <source>
        <dbReference type="UniProtKB" id="Q9UNS2"/>
    </source>
</evidence>
<evidence type="ECO:0000255" key="2">
    <source>
        <dbReference type="PROSITE-ProRule" id="PRU01185"/>
    </source>
</evidence>
<evidence type="ECO:0000256" key="3">
    <source>
        <dbReference type="SAM" id="MobiDB-lite"/>
    </source>
</evidence>
<evidence type="ECO:0000305" key="4"/>
<keyword id="KW-0963">Cytoplasm</keyword>
<keyword id="KW-0539">Nucleus</keyword>
<keyword id="KW-1185">Reference proteome</keyword>
<keyword id="KW-0736">Signalosome</keyword>
<protein>
    <recommendedName>
        <fullName>COP9 signalosome complex subunit 3</fullName>
        <shortName>Signalosome subunit 3</shortName>
    </recommendedName>
</protein>
<dbReference type="EMBL" id="BC044034">
    <property type="protein sequence ID" value="AAH44034.1"/>
    <property type="molecule type" value="mRNA"/>
</dbReference>
<dbReference type="RefSeq" id="NP_001080121.1">
    <property type="nucleotide sequence ID" value="NM_001086652.1"/>
</dbReference>
<dbReference type="SMR" id="Q7ZTN8"/>
<dbReference type="DNASU" id="379813"/>
<dbReference type="GeneID" id="379813"/>
<dbReference type="KEGG" id="xla:379813"/>
<dbReference type="AGR" id="Xenbase:XB-GENE-944163"/>
<dbReference type="CTD" id="379813"/>
<dbReference type="Xenbase" id="XB-GENE-944163">
    <property type="gene designation" value="cops3.L"/>
</dbReference>
<dbReference type="OMA" id="CLKARIH"/>
<dbReference type="OrthoDB" id="29061at2759"/>
<dbReference type="Proteomes" id="UP000186698">
    <property type="component" value="Chromosome 9_10L"/>
</dbReference>
<dbReference type="Bgee" id="379813">
    <property type="expression patterns" value="Expressed in muscle tissue and 19 other cell types or tissues"/>
</dbReference>
<dbReference type="GO" id="GO:0008180">
    <property type="term" value="C:COP9 signalosome"/>
    <property type="evidence" value="ECO:0000318"/>
    <property type="project" value="GO_Central"/>
</dbReference>
<dbReference type="GO" id="GO:0005737">
    <property type="term" value="C:cytoplasm"/>
    <property type="evidence" value="ECO:0007669"/>
    <property type="project" value="UniProtKB-SubCell"/>
</dbReference>
<dbReference type="GO" id="GO:0006511">
    <property type="term" value="P:ubiquitin-dependent protein catabolic process"/>
    <property type="evidence" value="ECO:0000318"/>
    <property type="project" value="GO_Central"/>
</dbReference>
<dbReference type="FunFam" id="1.10.10.10:FF:000354">
    <property type="entry name" value="COP9 signalosome complex subunit 3"/>
    <property type="match status" value="1"/>
</dbReference>
<dbReference type="FunFam" id="1.25.40.570:FF:000008">
    <property type="entry name" value="COP9 signalosome complex subunit 3"/>
    <property type="match status" value="1"/>
</dbReference>
<dbReference type="Gene3D" id="1.25.40.570">
    <property type="match status" value="1"/>
</dbReference>
<dbReference type="InterPro" id="IPR055089">
    <property type="entry name" value="COP9_N"/>
</dbReference>
<dbReference type="InterPro" id="IPR050756">
    <property type="entry name" value="CSN3"/>
</dbReference>
<dbReference type="InterPro" id="IPR048621">
    <property type="entry name" value="CSN3_C"/>
</dbReference>
<dbReference type="InterPro" id="IPR000717">
    <property type="entry name" value="PCI_dom"/>
</dbReference>
<dbReference type="InterPro" id="IPR036390">
    <property type="entry name" value="WH_DNA-bd_sf"/>
</dbReference>
<dbReference type="PANTHER" id="PTHR10758">
    <property type="entry name" value="26S PROTEASOME NON-ATPASE REGULATORY SUBUNIT 3/COP9 SIGNALOSOME COMPLEX SUBUNIT 3"/>
    <property type="match status" value="1"/>
</dbReference>
<dbReference type="PANTHER" id="PTHR10758:SF1">
    <property type="entry name" value="COP9 SIGNALOSOME COMPLEX SUBUNIT 3"/>
    <property type="match status" value="1"/>
</dbReference>
<dbReference type="Pfam" id="PF22788">
    <property type="entry name" value="COP9_hel_rpt"/>
    <property type="match status" value="1"/>
</dbReference>
<dbReference type="Pfam" id="PF21215">
    <property type="entry name" value="CSN3-like_C"/>
    <property type="match status" value="1"/>
</dbReference>
<dbReference type="Pfam" id="PF01399">
    <property type="entry name" value="PCI"/>
    <property type="match status" value="1"/>
</dbReference>
<dbReference type="SMART" id="SM00088">
    <property type="entry name" value="PINT"/>
    <property type="match status" value="1"/>
</dbReference>
<dbReference type="SUPFAM" id="SSF46785">
    <property type="entry name" value="Winged helix' DNA-binding domain"/>
    <property type="match status" value="1"/>
</dbReference>
<dbReference type="PROSITE" id="PS50250">
    <property type="entry name" value="PCI"/>
    <property type="match status" value="1"/>
</dbReference>
<reference key="1">
    <citation type="submission" date="2003-01" db="EMBL/GenBank/DDBJ databases">
        <authorList>
            <consortium name="NIH - Xenopus Gene Collection (XGC) project"/>
        </authorList>
    </citation>
    <scope>NUCLEOTIDE SEQUENCE [LARGE SCALE MRNA]</scope>
    <source>
        <tissue>Embryo</tissue>
    </source>
</reference>
<proteinExistence type="evidence at transcript level"/>
<name>CSN3_XENLA</name>